<feature type="chain" id="PRO_0000207698" description="Calpain-1 catalytic subunit">
    <location>
        <begin position="1"/>
        <end position="714"/>
    </location>
</feature>
<feature type="domain" description="Calpain catalytic" evidence="4">
    <location>
        <begin position="55"/>
        <end position="354"/>
    </location>
</feature>
<feature type="domain" description="EF-hand 1" evidence="6">
    <location>
        <begin position="541"/>
        <end position="576"/>
    </location>
</feature>
<feature type="domain" description="EF-hand 2" evidence="5">
    <location>
        <begin position="585"/>
        <end position="618"/>
    </location>
</feature>
<feature type="domain" description="EF-hand 3" evidence="5">
    <location>
        <begin position="615"/>
        <end position="650"/>
    </location>
</feature>
<feature type="domain" description="EF-hand 4" evidence="5">
    <location>
        <begin position="680"/>
        <end position="714"/>
    </location>
</feature>
<feature type="region of interest" description="Domain III">
    <location>
        <begin position="355"/>
        <end position="526"/>
    </location>
</feature>
<feature type="region of interest" description="Linker">
    <location>
        <begin position="527"/>
        <end position="542"/>
    </location>
</feature>
<feature type="region of interest" description="Domain IV">
    <location>
        <begin position="543"/>
        <end position="713"/>
    </location>
</feature>
<feature type="active site" evidence="1">
    <location>
        <position position="115"/>
    </location>
</feature>
<feature type="active site" evidence="1">
    <location>
        <position position="272"/>
    </location>
</feature>
<feature type="active site" evidence="1">
    <location>
        <position position="296"/>
    </location>
</feature>
<feature type="binding site" evidence="6">
    <location>
        <position position="109"/>
    </location>
    <ligand>
        <name>Ca(2+)</name>
        <dbReference type="ChEBI" id="CHEBI:29108"/>
        <label>1</label>
    </ligand>
</feature>
<feature type="binding site" evidence="6">
    <location>
        <position position="114"/>
    </location>
    <ligand>
        <name>Ca(2+)</name>
        <dbReference type="ChEBI" id="CHEBI:29108"/>
        <label>1</label>
    </ligand>
</feature>
<feature type="binding site" evidence="6">
    <location>
        <position position="316"/>
    </location>
    <ligand>
        <name>Ca(2+)</name>
        <dbReference type="ChEBI" id="CHEBI:29108"/>
        <label>2</label>
    </ligand>
</feature>
<feature type="binding site" evidence="6">
    <location>
        <position position="318"/>
    </location>
    <ligand>
        <name>Ca(2+)</name>
        <dbReference type="ChEBI" id="CHEBI:29108"/>
        <label>2</label>
    </ligand>
</feature>
<feature type="binding site" evidence="6">
    <location>
        <position position="323"/>
    </location>
    <ligand>
        <name>Ca(2+)</name>
        <dbReference type="ChEBI" id="CHEBI:29108"/>
        <label>2</label>
    </ligand>
</feature>
<feature type="binding site" evidence="5">
    <location>
        <position position="598"/>
    </location>
    <ligand>
        <name>Ca(2+)</name>
        <dbReference type="ChEBI" id="CHEBI:29108"/>
        <label>3</label>
    </ligand>
</feature>
<feature type="binding site" evidence="5">
    <location>
        <position position="600"/>
    </location>
    <ligand>
        <name>Ca(2+)</name>
        <dbReference type="ChEBI" id="CHEBI:29108"/>
        <label>3</label>
    </ligand>
</feature>
<feature type="binding site" evidence="5">
    <location>
        <position position="602"/>
    </location>
    <ligand>
        <name>Ca(2+)</name>
        <dbReference type="ChEBI" id="CHEBI:29108"/>
        <label>3</label>
    </ligand>
</feature>
<feature type="binding site" evidence="5">
    <location>
        <position position="604"/>
    </location>
    <ligand>
        <name>Ca(2+)</name>
        <dbReference type="ChEBI" id="CHEBI:29108"/>
        <label>3</label>
    </ligand>
</feature>
<feature type="binding site" evidence="5">
    <location>
        <position position="609"/>
    </location>
    <ligand>
        <name>Ca(2+)</name>
        <dbReference type="ChEBI" id="CHEBI:29108"/>
        <label>3</label>
    </ligand>
</feature>
<feature type="binding site" evidence="5">
    <location>
        <position position="628"/>
    </location>
    <ligand>
        <name>Ca(2+)</name>
        <dbReference type="ChEBI" id="CHEBI:29108"/>
        <label>4</label>
    </ligand>
</feature>
<feature type="binding site" evidence="5">
    <location>
        <position position="630"/>
    </location>
    <ligand>
        <name>Ca(2+)</name>
        <dbReference type="ChEBI" id="CHEBI:29108"/>
        <label>4</label>
    </ligand>
</feature>
<feature type="binding site" evidence="5">
    <location>
        <position position="632"/>
    </location>
    <ligand>
        <name>Ca(2+)</name>
        <dbReference type="ChEBI" id="CHEBI:29108"/>
        <label>4</label>
    </ligand>
</feature>
<feature type="binding site" evidence="5">
    <location>
        <position position="634"/>
    </location>
    <ligand>
        <name>Ca(2+)</name>
        <dbReference type="ChEBI" id="CHEBI:29108"/>
        <label>4</label>
    </ligand>
</feature>
<feature type="binding site" evidence="5">
    <location>
        <position position="639"/>
    </location>
    <ligand>
        <name>Ca(2+)</name>
        <dbReference type="ChEBI" id="CHEBI:29108"/>
        <label>4</label>
    </ligand>
</feature>
<feature type="site" description="Cleavage; for 78 kDa form" evidence="1">
    <location>
        <begin position="15"/>
        <end position="16"/>
    </location>
</feature>
<feature type="site" description="Cleavage; for 75 kDa form" evidence="1">
    <location>
        <begin position="27"/>
        <end position="28"/>
    </location>
</feature>
<feature type="modified residue" description="Phosphothreonine" evidence="2">
    <location>
        <position position="354"/>
    </location>
</feature>
<reference key="1">
    <citation type="submission" date="2004-11" db="EMBL/GenBank/DDBJ databases">
        <authorList>
            <consortium name="The German cDNA consortium"/>
        </authorList>
    </citation>
    <scope>NUCLEOTIDE SEQUENCE [LARGE SCALE MRNA]</scope>
    <source>
        <tissue>Brain cortex</tissue>
    </source>
</reference>
<organism>
    <name type="scientific">Pongo abelii</name>
    <name type="common">Sumatran orangutan</name>
    <name type="synonym">Pongo pygmaeus abelii</name>
    <dbReference type="NCBI Taxonomy" id="9601"/>
    <lineage>
        <taxon>Eukaryota</taxon>
        <taxon>Metazoa</taxon>
        <taxon>Chordata</taxon>
        <taxon>Craniata</taxon>
        <taxon>Vertebrata</taxon>
        <taxon>Euteleostomi</taxon>
        <taxon>Mammalia</taxon>
        <taxon>Eutheria</taxon>
        <taxon>Euarchontoglires</taxon>
        <taxon>Primates</taxon>
        <taxon>Haplorrhini</taxon>
        <taxon>Catarrhini</taxon>
        <taxon>Hominidae</taxon>
        <taxon>Pongo</taxon>
    </lineage>
</organism>
<gene>
    <name evidence="2" type="primary">CAPN1</name>
</gene>
<protein>
    <recommendedName>
        <fullName evidence="6">Calpain-1 catalytic subunit</fullName>
        <ecNumber evidence="2">3.4.22.52</ecNumber>
    </recommendedName>
    <alternativeName>
        <fullName evidence="2">Calcium-activated neutral proteinase 1</fullName>
        <shortName evidence="2">CANP 1</shortName>
    </alternativeName>
    <alternativeName>
        <fullName evidence="2">Calpain mu-type</fullName>
    </alternativeName>
    <alternativeName>
        <fullName>Calpain-1 large subunit</fullName>
    </alternativeName>
    <alternativeName>
        <fullName evidence="2">Micromolar-calpain</fullName>
        <shortName evidence="2">muCANP</shortName>
    </alternativeName>
</protein>
<proteinExistence type="evidence at transcript level"/>
<keyword id="KW-0068">Autocatalytic cleavage</keyword>
<keyword id="KW-0106">Calcium</keyword>
<keyword id="KW-1003">Cell membrane</keyword>
<keyword id="KW-0963">Cytoplasm</keyword>
<keyword id="KW-0378">Hydrolase</keyword>
<keyword id="KW-0472">Membrane</keyword>
<keyword id="KW-0479">Metal-binding</keyword>
<keyword id="KW-0597">Phosphoprotein</keyword>
<keyword id="KW-0645">Protease</keyword>
<keyword id="KW-1185">Reference proteome</keyword>
<keyword id="KW-0677">Repeat</keyword>
<keyword id="KW-0788">Thiol protease</keyword>
<accession>Q5NVS7</accession>
<name>CAN1_PONAB</name>
<evidence type="ECO:0000250" key="1"/>
<evidence type="ECO:0000250" key="2">
    <source>
        <dbReference type="UniProtKB" id="P07384"/>
    </source>
</evidence>
<evidence type="ECO:0000250" key="3">
    <source>
        <dbReference type="UniProtKB" id="P97571"/>
    </source>
</evidence>
<evidence type="ECO:0000255" key="4">
    <source>
        <dbReference type="PROSITE-ProRule" id="PRU00239"/>
    </source>
</evidence>
<evidence type="ECO:0000255" key="5">
    <source>
        <dbReference type="PROSITE-ProRule" id="PRU00448"/>
    </source>
</evidence>
<evidence type="ECO:0000305" key="6"/>
<dbReference type="EC" id="3.4.22.52" evidence="2"/>
<dbReference type="EMBL" id="CR925924">
    <property type="protein sequence ID" value="CAI29586.1"/>
    <property type="molecule type" value="mRNA"/>
</dbReference>
<dbReference type="RefSeq" id="NP_001127061.1">
    <property type="nucleotide sequence ID" value="NM_001133589.2"/>
</dbReference>
<dbReference type="SMR" id="Q5NVS7"/>
<dbReference type="FunCoup" id="Q5NVS7">
    <property type="interactions" value="1141"/>
</dbReference>
<dbReference type="STRING" id="9601.ENSPPYP00000003556"/>
<dbReference type="MEROPS" id="C02.001"/>
<dbReference type="GeneID" id="100174090"/>
<dbReference type="KEGG" id="pon:100174090"/>
<dbReference type="CTD" id="823"/>
<dbReference type="eggNOG" id="KOG0045">
    <property type="taxonomic scope" value="Eukaryota"/>
</dbReference>
<dbReference type="InParanoid" id="Q5NVS7"/>
<dbReference type="OrthoDB" id="424753at2759"/>
<dbReference type="Proteomes" id="UP000001595">
    <property type="component" value="Unplaced"/>
</dbReference>
<dbReference type="GO" id="GO:0005829">
    <property type="term" value="C:cytosol"/>
    <property type="evidence" value="ECO:0000250"/>
    <property type="project" value="UniProtKB"/>
</dbReference>
<dbReference type="GO" id="GO:0005886">
    <property type="term" value="C:plasma membrane"/>
    <property type="evidence" value="ECO:0000250"/>
    <property type="project" value="UniProtKB"/>
</dbReference>
<dbReference type="GO" id="GO:0005509">
    <property type="term" value="F:calcium ion binding"/>
    <property type="evidence" value="ECO:0000250"/>
    <property type="project" value="UniProtKB"/>
</dbReference>
<dbReference type="GO" id="GO:0004198">
    <property type="term" value="F:calcium-dependent cysteine-type endopeptidase activity"/>
    <property type="evidence" value="ECO:0000250"/>
    <property type="project" value="UniProtKB"/>
</dbReference>
<dbReference type="GO" id="GO:0008233">
    <property type="term" value="F:peptidase activity"/>
    <property type="evidence" value="ECO:0000250"/>
    <property type="project" value="UniProtKB"/>
</dbReference>
<dbReference type="GO" id="GO:0006508">
    <property type="term" value="P:proteolysis"/>
    <property type="evidence" value="ECO:0000250"/>
    <property type="project" value="UniProtKB"/>
</dbReference>
<dbReference type="GO" id="GO:0050790">
    <property type="term" value="P:regulation of catalytic activity"/>
    <property type="evidence" value="ECO:0000250"/>
    <property type="project" value="UniProtKB"/>
</dbReference>
<dbReference type="GO" id="GO:0097264">
    <property type="term" value="P:self proteolysis"/>
    <property type="evidence" value="ECO:0000250"/>
    <property type="project" value="UniProtKB"/>
</dbReference>
<dbReference type="CDD" id="cd00214">
    <property type="entry name" value="Calpain_III"/>
    <property type="match status" value="1"/>
</dbReference>
<dbReference type="CDD" id="cd00044">
    <property type="entry name" value="CysPc"/>
    <property type="match status" value="1"/>
</dbReference>
<dbReference type="CDD" id="cd16198">
    <property type="entry name" value="EFh_PEF_CAPN1"/>
    <property type="match status" value="1"/>
</dbReference>
<dbReference type="FunFam" id="1.10.238.10:FF:000124">
    <property type="entry name" value="Calpain-1 catalytic subunit"/>
    <property type="match status" value="1"/>
</dbReference>
<dbReference type="FunFam" id="2.60.120.380:FF:000001">
    <property type="entry name" value="Calpain-1 catalytic subunit"/>
    <property type="match status" value="1"/>
</dbReference>
<dbReference type="FunFam" id="3.90.70.10:FF:000001">
    <property type="entry name" value="Calpain-1 catalytic subunit"/>
    <property type="match status" value="1"/>
</dbReference>
<dbReference type="Gene3D" id="2.60.120.380">
    <property type="match status" value="1"/>
</dbReference>
<dbReference type="Gene3D" id="3.90.70.10">
    <property type="entry name" value="Cysteine proteinases"/>
    <property type="match status" value="1"/>
</dbReference>
<dbReference type="Gene3D" id="1.10.238.10">
    <property type="entry name" value="EF-hand"/>
    <property type="match status" value="1"/>
</dbReference>
<dbReference type="InterPro" id="IPR033883">
    <property type="entry name" value="C2_III"/>
</dbReference>
<dbReference type="InterPro" id="IPR022684">
    <property type="entry name" value="Calpain_cysteine_protease"/>
</dbReference>
<dbReference type="InterPro" id="IPR022682">
    <property type="entry name" value="Calpain_domain_III"/>
</dbReference>
<dbReference type="InterPro" id="IPR022683">
    <property type="entry name" value="Calpain_III"/>
</dbReference>
<dbReference type="InterPro" id="IPR036213">
    <property type="entry name" value="Calpain_III_sf"/>
</dbReference>
<dbReference type="InterPro" id="IPR011992">
    <property type="entry name" value="EF-hand-dom_pair"/>
</dbReference>
<dbReference type="InterPro" id="IPR018247">
    <property type="entry name" value="EF_Hand_1_Ca_BS"/>
</dbReference>
<dbReference type="InterPro" id="IPR002048">
    <property type="entry name" value="EF_hand_dom"/>
</dbReference>
<dbReference type="InterPro" id="IPR038765">
    <property type="entry name" value="Papain-like_cys_pep_sf"/>
</dbReference>
<dbReference type="InterPro" id="IPR000169">
    <property type="entry name" value="Pept_cys_AS"/>
</dbReference>
<dbReference type="InterPro" id="IPR001300">
    <property type="entry name" value="Peptidase_C2_calpain_cat"/>
</dbReference>
<dbReference type="PANTHER" id="PTHR10183">
    <property type="entry name" value="CALPAIN"/>
    <property type="match status" value="1"/>
</dbReference>
<dbReference type="PANTHER" id="PTHR10183:SF284">
    <property type="entry name" value="CALPAIN-1 CATALYTIC SUBUNIT"/>
    <property type="match status" value="1"/>
</dbReference>
<dbReference type="Pfam" id="PF01067">
    <property type="entry name" value="Calpain_III"/>
    <property type="match status" value="1"/>
</dbReference>
<dbReference type="Pfam" id="PF13833">
    <property type="entry name" value="EF-hand_8"/>
    <property type="match status" value="1"/>
</dbReference>
<dbReference type="Pfam" id="PF00648">
    <property type="entry name" value="Peptidase_C2"/>
    <property type="match status" value="1"/>
</dbReference>
<dbReference type="PRINTS" id="PR00704">
    <property type="entry name" value="CALPAIN"/>
</dbReference>
<dbReference type="SMART" id="SM00720">
    <property type="entry name" value="calpain_III"/>
    <property type="match status" value="1"/>
</dbReference>
<dbReference type="SMART" id="SM00230">
    <property type="entry name" value="CysPc"/>
    <property type="match status" value="1"/>
</dbReference>
<dbReference type="SUPFAM" id="SSF49758">
    <property type="entry name" value="Calpain large subunit, middle domain (domain III)"/>
    <property type="match status" value="1"/>
</dbReference>
<dbReference type="SUPFAM" id="SSF54001">
    <property type="entry name" value="Cysteine proteinases"/>
    <property type="match status" value="1"/>
</dbReference>
<dbReference type="SUPFAM" id="SSF47473">
    <property type="entry name" value="EF-hand"/>
    <property type="match status" value="1"/>
</dbReference>
<dbReference type="PROSITE" id="PS50203">
    <property type="entry name" value="CALPAIN_CAT"/>
    <property type="match status" value="1"/>
</dbReference>
<dbReference type="PROSITE" id="PS00018">
    <property type="entry name" value="EF_HAND_1"/>
    <property type="match status" value="2"/>
</dbReference>
<dbReference type="PROSITE" id="PS50222">
    <property type="entry name" value="EF_HAND_2"/>
    <property type="match status" value="3"/>
</dbReference>
<dbReference type="PROSITE" id="PS00139">
    <property type="entry name" value="THIOL_PROTEASE_CYS"/>
    <property type="match status" value="1"/>
</dbReference>
<comment type="function">
    <text evidence="2">Calcium-regulated non-lysosomal thiol-protease which catalyzes limited proteolysis of substrates involved in cytoskeletal remodeling and signal transduction. Proteolytically cleaves CTBP1. Cleaves and activates caspase-7 (CASP7).</text>
</comment>
<comment type="catalytic activity">
    <reaction evidence="2">
        <text>Broad endopeptidase specificity.</text>
        <dbReference type="EC" id="3.4.22.52"/>
    </reaction>
</comment>
<comment type="cofactor">
    <cofactor evidence="2">
        <name>Ca(2+)</name>
        <dbReference type="ChEBI" id="CHEBI:29108"/>
    </cofactor>
    <text evidence="2">Binds 4 Ca(2+) ions.</text>
</comment>
<comment type="activity regulation">
    <text evidence="2">Activated by micromolar concentrations of calcium and inhibited by calpastatin.</text>
</comment>
<comment type="subunit">
    <text evidence="3">Forms a heterodimer with a small (regulatory) subunit CAPNS1.</text>
</comment>
<comment type="subcellular location">
    <subcellularLocation>
        <location evidence="2">Cytoplasm</location>
    </subcellularLocation>
    <subcellularLocation>
        <location evidence="2">Cell membrane</location>
    </subcellularLocation>
    <text evidence="2">Translocates to the plasma membrane upon Ca(2+) binding.</text>
</comment>
<comment type="PTM">
    <text evidence="2">Undergoes calcium-induced successive autoproteolytic cleavages that generate a membrane-bound 78 kDa active form and an intracellular 75 kDa active form. Calpastatin reduces with high efficiency the transition from 78 kDa to 75 kDa calpain forms (By similarity).</text>
</comment>
<comment type="similarity">
    <text evidence="6">Belongs to the peptidase C2 family.</text>
</comment>
<sequence length="714" mass="81854">MSEEIITPVYCTGVSAQVQKQRARELGLGRHENAIKYLGQDYEQLRVRCLQSGTLFRDEAFPPVPQSLGYKDLGPNSSKTYGIKWKRPTELLSNPQFIVDGATRTDICQGALGDCWLLAAIASLTLNDTLLHRVVPHGQSFQNGYAGIFHFQLWQFGEWVDVVVDDLLPIKDGKLVFVHSAEGNEFWSALLEKAYAKVNGSYEALSGGSTSEGFEDFTGGVTEWYELRKAPSDLYQIILKALERGSLLGCSIDISSVLDMEAITFKKLVKGHAYSVTGAKQVNYRGQMVSLIRMRNPWGEVEWTGAWSDSSSEWNNVDPYERDQLRVKMEDGEFWMSFRDFMREFTRLEICNLTPDALKSRTIRKWNTTLYEGTWRRGSTAGGCRNYPATFWVNPQFKIRLDETDDPDDYGDRESGCSFVLALMQKHRRRERRFGRDMETIGFAVYEVPPELAGQPAVHLKRDFFLANASRARSEQFINLREVSTRFRLPPGEYVVVPSTFEPNKEGDFVLRFFSEKSAGTAELDDQIQANLPDEQVLSEEEIDENFKALFRQLAGEDMETSVKELRTILNRIISKHKDLRTKGFSLESCRSMVNLMDRDGNGKLGLVEFNILWNRIRNYLSIFRKFDLDKSGSMSAYEMRMAIESAGFKLNKKLYELIITRYSEPDLAVDFDNFVCCLVRLETMFRFFKTLDTDLDGVVTFDLFKWLQLTMFA</sequence>